<accession>B3QF66</accession>
<reference key="1">
    <citation type="submission" date="2008-05" db="EMBL/GenBank/DDBJ databases">
        <title>Complete sequence of Rhodopseudomonas palustris TIE-1.</title>
        <authorList>
            <consortium name="US DOE Joint Genome Institute"/>
            <person name="Lucas S."/>
            <person name="Copeland A."/>
            <person name="Lapidus A."/>
            <person name="Glavina del Rio T."/>
            <person name="Dalin E."/>
            <person name="Tice H."/>
            <person name="Pitluck S."/>
            <person name="Chain P."/>
            <person name="Malfatti S."/>
            <person name="Shin M."/>
            <person name="Vergez L."/>
            <person name="Lang D."/>
            <person name="Schmutz J."/>
            <person name="Larimer F."/>
            <person name="Land M."/>
            <person name="Hauser L."/>
            <person name="Kyrpides N."/>
            <person name="Mikhailova N."/>
            <person name="Emerson D."/>
            <person name="Newman D.K."/>
            <person name="Roden E."/>
            <person name="Richardson P."/>
        </authorList>
    </citation>
    <scope>NUCLEOTIDE SEQUENCE [LARGE SCALE GENOMIC DNA]</scope>
    <source>
        <strain>TIE-1</strain>
    </source>
</reference>
<keyword id="KW-0963">Cytoplasm</keyword>
<keyword id="KW-0350">Heme biosynthesis</keyword>
<keyword id="KW-0408">Iron</keyword>
<keyword id="KW-0456">Lyase</keyword>
<keyword id="KW-0479">Metal-binding</keyword>
<keyword id="KW-0627">Porphyrin biosynthesis</keyword>
<name>HEMH_RHOPT</name>
<comment type="function">
    <text evidence="1">Catalyzes the ferrous insertion into protoporphyrin IX.</text>
</comment>
<comment type="catalytic activity">
    <reaction evidence="1">
        <text>heme b + 2 H(+) = protoporphyrin IX + Fe(2+)</text>
        <dbReference type="Rhea" id="RHEA:22584"/>
        <dbReference type="ChEBI" id="CHEBI:15378"/>
        <dbReference type="ChEBI" id="CHEBI:29033"/>
        <dbReference type="ChEBI" id="CHEBI:57306"/>
        <dbReference type="ChEBI" id="CHEBI:60344"/>
        <dbReference type="EC" id="4.98.1.1"/>
    </reaction>
</comment>
<comment type="pathway">
    <text evidence="1">Porphyrin-containing compound metabolism; protoheme biosynthesis; protoheme from protoporphyrin-IX: step 1/1.</text>
</comment>
<comment type="subcellular location">
    <subcellularLocation>
        <location evidence="1">Cytoplasm</location>
    </subcellularLocation>
</comment>
<comment type="similarity">
    <text evidence="1">Belongs to the ferrochelatase family.</text>
</comment>
<proteinExistence type="inferred from homology"/>
<dbReference type="EC" id="4.98.1.1" evidence="1"/>
<dbReference type="EMBL" id="CP001096">
    <property type="protein sequence ID" value="ACE99500.1"/>
    <property type="molecule type" value="Genomic_DNA"/>
</dbReference>
<dbReference type="RefSeq" id="WP_012494544.1">
    <property type="nucleotide sequence ID" value="NC_011004.1"/>
</dbReference>
<dbReference type="SMR" id="B3QF66"/>
<dbReference type="KEGG" id="rpt:Rpal_0943"/>
<dbReference type="HOGENOM" id="CLU_018884_0_0_5"/>
<dbReference type="OrthoDB" id="9809741at2"/>
<dbReference type="UniPathway" id="UPA00252">
    <property type="reaction ID" value="UER00325"/>
</dbReference>
<dbReference type="Proteomes" id="UP000001725">
    <property type="component" value="Chromosome"/>
</dbReference>
<dbReference type="GO" id="GO:0005737">
    <property type="term" value="C:cytoplasm"/>
    <property type="evidence" value="ECO:0007669"/>
    <property type="project" value="UniProtKB-SubCell"/>
</dbReference>
<dbReference type="GO" id="GO:0004325">
    <property type="term" value="F:ferrochelatase activity"/>
    <property type="evidence" value="ECO:0007669"/>
    <property type="project" value="UniProtKB-UniRule"/>
</dbReference>
<dbReference type="GO" id="GO:0046872">
    <property type="term" value="F:metal ion binding"/>
    <property type="evidence" value="ECO:0007669"/>
    <property type="project" value="UniProtKB-KW"/>
</dbReference>
<dbReference type="GO" id="GO:0006783">
    <property type="term" value="P:heme biosynthetic process"/>
    <property type="evidence" value="ECO:0007669"/>
    <property type="project" value="UniProtKB-UniRule"/>
</dbReference>
<dbReference type="CDD" id="cd00419">
    <property type="entry name" value="Ferrochelatase_C"/>
    <property type="match status" value="1"/>
</dbReference>
<dbReference type="CDD" id="cd03411">
    <property type="entry name" value="Ferrochelatase_N"/>
    <property type="match status" value="1"/>
</dbReference>
<dbReference type="FunFam" id="3.40.50.1400:FF:000002">
    <property type="entry name" value="Ferrochelatase"/>
    <property type="match status" value="1"/>
</dbReference>
<dbReference type="Gene3D" id="3.40.50.1400">
    <property type="match status" value="2"/>
</dbReference>
<dbReference type="HAMAP" id="MF_00323">
    <property type="entry name" value="Ferrochelatase"/>
    <property type="match status" value="1"/>
</dbReference>
<dbReference type="InterPro" id="IPR001015">
    <property type="entry name" value="Ferrochelatase"/>
</dbReference>
<dbReference type="InterPro" id="IPR019772">
    <property type="entry name" value="Ferrochelatase_AS"/>
</dbReference>
<dbReference type="InterPro" id="IPR033644">
    <property type="entry name" value="Ferrochelatase_C"/>
</dbReference>
<dbReference type="InterPro" id="IPR033659">
    <property type="entry name" value="Ferrochelatase_N"/>
</dbReference>
<dbReference type="NCBIfam" id="TIGR00109">
    <property type="entry name" value="hemH"/>
    <property type="match status" value="1"/>
</dbReference>
<dbReference type="PANTHER" id="PTHR11108">
    <property type="entry name" value="FERROCHELATASE"/>
    <property type="match status" value="1"/>
</dbReference>
<dbReference type="PANTHER" id="PTHR11108:SF1">
    <property type="entry name" value="FERROCHELATASE, MITOCHONDRIAL"/>
    <property type="match status" value="1"/>
</dbReference>
<dbReference type="Pfam" id="PF00762">
    <property type="entry name" value="Ferrochelatase"/>
    <property type="match status" value="1"/>
</dbReference>
<dbReference type="SUPFAM" id="SSF53800">
    <property type="entry name" value="Chelatase"/>
    <property type="match status" value="1"/>
</dbReference>
<dbReference type="PROSITE" id="PS00534">
    <property type="entry name" value="FERROCHELATASE"/>
    <property type="match status" value="1"/>
</dbReference>
<organism>
    <name type="scientific">Rhodopseudomonas palustris (strain TIE-1)</name>
    <dbReference type="NCBI Taxonomy" id="395960"/>
    <lineage>
        <taxon>Bacteria</taxon>
        <taxon>Pseudomonadati</taxon>
        <taxon>Pseudomonadota</taxon>
        <taxon>Alphaproteobacteria</taxon>
        <taxon>Hyphomicrobiales</taxon>
        <taxon>Nitrobacteraceae</taxon>
        <taxon>Rhodopseudomonas</taxon>
    </lineage>
</organism>
<evidence type="ECO:0000255" key="1">
    <source>
        <dbReference type="HAMAP-Rule" id="MF_00323"/>
    </source>
</evidence>
<gene>
    <name evidence="1" type="primary">hemH</name>
    <name type="ordered locus">Rpal_0943</name>
</gene>
<protein>
    <recommendedName>
        <fullName evidence="1">Ferrochelatase</fullName>
        <ecNumber evidence="1">4.98.1.1</ecNumber>
    </recommendedName>
    <alternativeName>
        <fullName evidence="1">Heme synthase</fullName>
    </alternativeName>
    <alternativeName>
        <fullName evidence="1">Protoheme ferro-lyase</fullName>
    </alternativeName>
</protein>
<sequence length="345" mass="38448">MSVIVPIHGPAIAPAPAPERVGVLLVNLGTPDSCDTKGVRIYLREFLSDPRVIENQGLFWKLALNGIILNTRPARKAKDYQKIWNHEKNESPLKTITRAQAEKLSASLGDRGHLIVDWAMRYGNPSLRDRIEALVAKGCSRLLVVPLYPQYSAATSATVCDQAFRVLRELRAQPTLRVTPPYYRDSAYIDALATSIKSHLASLTFEPELIVASFHGMPQAYIDKGDPYQAQCVATVEALRERMGVADDKLLLTFQSRFGFDQWLQPYTDKTIEALARKGVRKLAVVMPGFSADCLETLEEIAQENAEIFMEHGGEEFTAIPCLNDSDAGVQVIRQLVLRELQGWL</sequence>
<feature type="chain" id="PRO_1000116072" description="Ferrochelatase">
    <location>
        <begin position="1"/>
        <end position="345"/>
    </location>
</feature>
<feature type="binding site" evidence="1">
    <location>
        <position position="215"/>
    </location>
    <ligand>
        <name>Fe cation</name>
        <dbReference type="ChEBI" id="CHEBI:24875"/>
    </ligand>
</feature>
<feature type="binding site" evidence="1">
    <location>
        <position position="296"/>
    </location>
    <ligand>
        <name>Fe cation</name>
        <dbReference type="ChEBI" id="CHEBI:24875"/>
    </ligand>
</feature>